<sequence length="1314" mass="151595">MGAASGQRGQGPPSPLLLLWLSLLLLLLPPSPAPALDPGLQPGNFSADEIGAHLFAESYNSSAEQVIFQSTVASWAYDTNMTEENARLQEEAELIWQEFAEVWGKKAKELFDAIRQNFTDSKLRRVIETIRTLGPANLPLARRQQYNSLQNNMNRIYSTSKVCLPNKTATCWSLEPELTNILASSRSYAKLLFAWESWHDVVGIPLKPLYQDFTALSNEAYKQDGFSDTGAYWRSAYDSPSFEETLEHLYHQLEPLYLNLHAYVRRALHRRYGDKYINLRGPIPAHLLGDMWAQSWDNIYDMVVPFPNKPNLDVTNTMVQKGWNVTHMFRVAEEFFTSMGLSPMPPEFWAESMLEKPTDGREVVCHASAWDFFNRKDFRIKQCTRITMEQLSTVHHEMGHVQYYLQYKDLTVPLRRGANPGFHEAIGDVLALSVSTPAHLHKIGLLDRVANDLESDINYLLKMALEKIAFLPFGYLVDQWRWGVFSGHTPPSRYNFDWWYFRTKYQGICPPVVRNETHFDAGAKFHIPSGTPYIRYFVSFILQFQFHQALCKEAGHQGPLHQCDIYQSTQAGAKLQRVLQAGYSRPWQEVLKEMVGSDTLDAQALLEYFQPVIRWLQEQNQRNGEVLGWPEYQWRPPLPDNYPEGIDLVTDETEAERFVEEYDRTARVLWNEYAEANWQYNTNITLEASKILLQKNKKVANHTLKYGTLAKKFDVSNFQNYTIKRIIKKVQNMDRAVLPPKELEEYNQILMDMETTYSIANVCYLNGTCLHLEPDLTNVMATSRKYEELLWVWKSWRDKVGRAILPLFPKYVELSNKIAHLNGYADGGDSWRSSYESKSLEQDLEQLYQELQPLYLNLHAYVRRSLHRHYGSQHINLDGPIPAHLLGNMWAQTWSNIYDLVAPFPSAPNLDATEAMIKQGWTPRRIFKEADDFFTSLGLLPVSEEFWNKSMLEKPGDGREVVCHASAWDFYNGKDFRIKQCTSVNMEDLVIAHHEMGHIQYFMQYKDLPVTFREGANPGFHEAIGDVLALSVSTPKHLHSLNLLSSEGGGYEHDINFLMKMALDKIAFIPFSYLIDQWRWRVFDGSITKENYNQEWWSLRLKYQGLCPPVPRSQDDFDPGSKFHVPANVPYIRYFVSFIIQFQFHEALCRAAGHTGPLHKCDIYQSKEAGKLLADTMKMGYSKPWPEAMKLITGQPNMSASAMMNYFKPLTEWLVTENRRHGETLGWPEYNWTPNTARSEGPFPESGRVNFLGMYLEPQQARVGQWVLLFLGVSLLVATLGLTHRLFSIRQHGHSLHRPHRGPQFGSEVELRHS</sequence>
<accession>Q50JE5</accession>
<name>ACE_MESAU</name>
<keyword id="KW-0877">Alternative promoter usage</keyword>
<keyword id="KW-0112">Calmodulin-binding</keyword>
<keyword id="KW-0121">Carboxypeptidase</keyword>
<keyword id="KW-1003">Cell membrane</keyword>
<keyword id="KW-0963">Cytoplasm</keyword>
<keyword id="KW-1015">Disulfide bond</keyword>
<keyword id="KW-0325">Glycoprotein</keyword>
<keyword id="KW-0378">Hydrolase</keyword>
<keyword id="KW-0472">Membrane</keyword>
<keyword id="KW-0479">Metal-binding</keyword>
<keyword id="KW-0482">Metalloprotease</keyword>
<keyword id="KW-0597">Phosphoprotein</keyword>
<keyword id="KW-0645">Protease</keyword>
<keyword id="KW-1185">Reference proteome</keyword>
<keyword id="KW-0677">Repeat</keyword>
<keyword id="KW-0964">Secreted</keyword>
<keyword id="KW-0732">Signal</keyword>
<keyword id="KW-0812">Transmembrane</keyword>
<keyword id="KW-1133">Transmembrane helix</keyword>
<keyword id="KW-0862">Zinc</keyword>
<organism>
    <name type="scientific">Mesocricetus auratus</name>
    <name type="common">Golden hamster</name>
    <dbReference type="NCBI Taxonomy" id="10036"/>
    <lineage>
        <taxon>Eukaryota</taxon>
        <taxon>Metazoa</taxon>
        <taxon>Chordata</taxon>
        <taxon>Craniata</taxon>
        <taxon>Vertebrata</taxon>
        <taxon>Euteleostomi</taxon>
        <taxon>Mammalia</taxon>
        <taxon>Eutheria</taxon>
        <taxon>Euarchontoglires</taxon>
        <taxon>Glires</taxon>
        <taxon>Rodentia</taxon>
        <taxon>Myomorpha</taxon>
        <taxon>Muroidea</taxon>
        <taxon>Cricetidae</taxon>
        <taxon>Cricetinae</taxon>
        <taxon>Mesocricetus</taxon>
    </lineage>
</organism>
<gene>
    <name evidence="8" type="primary">Ace</name>
    <name type="synonym">Dcp1</name>
</gene>
<proteinExistence type="evidence at transcript level"/>
<comment type="function">
    <text evidence="1 2">Dipeptidyl carboxypeptidase that removes dipeptides from the C-terminus of a variety of circulating hormones, such as angiotensin I, bradykinin or enkephalins, thereby playing a key role in the regulation of blood pressure, electrolyte homeostasis or synaptic plasticity. Composed of two similar catalytic domains, each possessing a functional active site, with different selectivity for substrates. Plays a major role in the angiotensin-renin system that regulates blood pressure and sodium retention by the kidney by converting angiotensin I to angiotensin II, resulting in an increase of the vasoconstrictor activity of angiotensin. Also able to inactivate bradykinin, a potent vasodilator, and therefore enhance the blood pressure response. Acts as a regulator of synaptic transmission by mediating cleavage of neuropeptide hormones, such as substance P, neurotensin or enkephalins. Catalyzes degradation of different enkephalin neuropeptides (Met-enkephalin, Leu-enkephalin, Met-enkephalin-Arg-Phe and possibly Met-enkephalin-Arg-Gly-Leu) (By similarity). Acts as a regulator of synaptic plasticity in the nucleus accumbens of the brain by mediating cleavage of Met-enkephalin-Arg-Phe, a strong ligand of Mu-type opioid receptor OPRM1, into Met-enkephalin. Met-enkephalin-Arg-Phe cleavage by ACE decreases activation of OPRM1, leading to long-term synaptic potentiation of glutamate release (By similarity). Also acts as a regulator of hematopoietic stem cell differentiation by mediating degradation of hemoregulatory peptide N-acetyl-SDKP (AcSDKP). Acts as a regulator of cannabinoid signaling pathway by mediating degradation of hemopressin, an antagonist peptide of the cannabinoid receptor CNR1. Involved in amyloid-beta metabolism by catalyzing degradation of Amyloid-beta protein 40 and Amyloid-beta protein 42 peptides, thereby preventing plaque formation. Catalyzes cleavage of cholecystokinin (maturation of Cholecystokinin-8 and Cholecystokinin-5) and Gonadoliberin-1 (both maturation and degradation) hormones. Degradation of hemoregulatory peptide N-acetyl-SDKP (AcSDKP) and amyloid-beta proteins is mediated by the N-terminal catalytic domain, while angiotensin I and cholecystokinin cleavage is mediated by the C-terminal catalytic region (By similarity).</text>
</comment>
<comment type="function">
    <molecule>Angiotensin-converting enzyme, soluble form</molecule>
    <text evidence="2">Soluble form that is released in blood plasma and other body fluids following proteolytic cleavage in the juxtamembrane stalk region.</text>
</comment>
<comment type="function">
    <molecule>Isoform Testis-specific</molecule>
    <text evidence="1 2">Isoform produced by alternative promoter usage that is specifically expressed in spermatocytes and adult testis, and which is required for male fertility. In contrast to somatic isoforms, only contains one catalytic domain. Acts as a dipeptidyl carboxypeptidase that removes dipeptides from the C-terminus of substrates (By similarity). The identity of substrates that are needed for male fertility is unknown. May also have a glycosidase activity which releases GPI-anchored proteins from the membrane by cleaving the mannose linkage in the GPI moiety. The GPIase activity was reported to be essential for the egg-binding ability of the sperm. This activity is however unclear and has been challenged by other groups, suggesting that it may be indirect (By similarity).</text>
</comment>
<comment type="catalytic activity">
    <reaction evidence="2">
        <text>Release of a C-terminal dipeptide, oligopeptide-|-Xaa-Yaa, when Xaa is not Pro, and Yaa is neither Asp nor Glu. Thus, conversion of angiotensin I to angiotensin II, with increase in vasoconstrictor activity, but no action on angiotensin II.</text>
        <dbReference type="EC" id="3.4.15.1"/>
    </reaction>
</comment>
<comment type="catalytic activity">
    <reaction evidence="2">
        <text>angiotensin I + H2O = L-histidyl-L-leucine + angiotensin II</text>
        <dbReference type="Rhea" id="RHEA:63560"/>
        <dbReference type="ChEBI" id="CHEBI:15377"/>
        <dbReference type="ChEBI" id="CHEBI:58506"/>
        <dbReference type="ChEBI" id="CHEBI:147350"/>
        <dbReference type="ChEBI" id="CHEBI:147392"/>
        <dbReference type="EC" id="3.4.15.1"/>
    </reaction>
    <physiologicalReaction direction="left-to-right" evidence="2">
        <dbReference type="Rhea" id="RHEA:63561"/>
    </physiologicalReaction>
</comment>
<comment type="catalytic activity">
    <reaction evidence="2">
        <text>bradykinin + H2O = L-Phe-L-Arg + bradykinin(1-7)</text>
        <dbReference type="Rhea" id="RHEA:71451"/>
        <dbReference type="ChEBI" id="CHEBI:15377"/>
        <dbReference type="ChEBI" id="CHEBI:132988"/>
        <dbReference type="ChEBI" id="CHEBI:133147"/>
        <dbReference type="ChEBI" id="CHEBI:147352"/>
    </reaction>
    <physiologicalReaction direction="left-to-right" evidence="2">
        <dbReference type="Rhea" id="RHEA:71452"/>
    </physiologicalReaction>
</comment>
<comment type="catalytic activity">
    <reaction evidence="2">
        <text>substance P + H2O = substance P(1-9) + L-Leu-L-Met-NH2</text>
        <dbReference type="Rhea" id="RHEA:71459"/>
        <dbReference type="ChEBI" id="CHEBI:15377"/>
        <dbReference type="ChEBI" id="CHEBI:190692"/>
        <dbReference type="ChEBI" id="CHEBI:190693"/>
        <dbReference type="ChEBI" id="CHEBI:190700"/>
    </reaction>
    <physiologicalReaction direction="left-to-right" evidence="2">
        <dbReference type="Rhea" id="RHEA:71460"/>
    </physiologicalReaction>
</comment>
<comment type="catalytic activity">
    <reaction evidence="2">
        <text>substance P + H2O = substance P(1-8) + Gly-L-Leu-L-Met-NH2</text>
        <dbReference type="Rhea" id="RHEA:71463"/>
        <dbReference type="ChEBI" id="CHEBI:15377"/>
        <dbReference type="ChEBI" id="CHEBI:190692"/>
        <dbReference type="ChEBI" id="CHEBI:190694"/>
        <dbReference type="ChEBI" id="CHEBI:190699"/>
    </reaction>
    <physiologicalReaction direction="left-to-right" evidence="2">
        <dbReference type="Rhea" id="RHEA:71464"/>
    </physiologicalReaction>
</comment>
<comment type="catalytic activity">
    <reaction evidence="2">
        <text>substance P + H2O = L-Phe-L-Phe-Gly-L-Leu-L-Met-NH2 + substance P(1-6)</text>
        <dbReference type="Rhea" id="RHEA:71471"/>
        <dbReference type="ChEBI" id="CHEBI:15377"/>
        <dbReference type="ChEBI" id="CHEBI:190692"/>
        <dbReference type="ChEBI" id="CHEBI:190696"/>
        <dbReference type="ChEBI" id="CHEBI:190697"/>
    </reaction>
    <physiologicalReaction direction="left-to-right" evidence="2">
        <dbReference type="Rhea" id="RHEA:71472"/>
    </physiologicalReaction>
</comment>
<comment type="catalytic activity">
    <reaction evidence="2">
        <text>neurotensin + H2O = neurotensin(1-11) + L-isoleucyl-L-leucine</text>
        <dbReference type="Rhea" id="RHEA:71475"/>
        <dbReference type="ChEBI" id="CHEBI:15377"/>
        <dbReference type="ChEBI" id="CHEBI:147362"/>
        <dbReference type="ChEBI" id="CHEBI:190704"/>
        <dbReference type="ChEBI" id="CHEBI:190706"/>
    </reaction>
    <physiologicalReaction direction="left-to-right" evidence="2">
        <dbReference type="Rhea" id="RHEA:71476"/>
    </physiologicalReaction>
</comment>
<comment type="catalytic activity">
    <reaction evidence="2">
        <text>goralatide + H2O = N-acetyl-L-seryl-L-aspartate + L-lysyl-L-proline</text>
        <dbReference type="Rhea" id="RHEA:71455"/>
        <dbReference type="ChEBI" id="CHEBI:15377"/>
        <dbReference type="ChEBI" id="CHEBI:190701"/>
        <dbReference type="ChEBI" id="CHEBI:190702"/>
        <dbReference type="ChEBI" id="CHEBI:190703"/>
    </reaction>
    <physiologicalReaction direction="left-to-right" evidence="2">
        <dbReference type="Rhea" id="RHEA:71456"/>
    </physiologicalReaction>
</comment>
<comment type="catalytic activity">
    <reaction evidence="2">
        <text>Met-enkephalin + H2O = L-phenylalanyl-L-methionine + L-tyrosylglycylglycine</text>
        <dbReference type="Rhea" id="RHEA:71483"/>
        <dbReference type="ChEBI" id="CHEBI:15377"/>
        <dbReference type="ChEBI" id="CHEBI:189868"/>
        <dbReference type="ChEBI" id="CHEBI:190708"/>
        <dbReference type="ChEBI" id="CHEBI:190709"/>
    </reaction>
    <physiologicalReaction direction="left-to-right" evidence="2">
        <dbReference type="Rhea" id="RHEA:71484"/>
    </physiologicalReaction>
</comment>
<comment type="catalytic activity">
    <reaction evidence="2">
        <text>Leu-enkephalin + H2O = L-tyrosylglycylglycine + L-phenylalanyl-L-leucine</text>
        <dbReference type="Rhea" id="RHEA:71487"/>
        <dbReference type="ChEBI" id="CHEBI:15377"/>
        <dbReference type="ChEBI" id="CHEBI:190689"/>
        <dbReference type="ChEBI" id="CHEBI:190708"/>
        <dbReference type="ChEBI" id="CHEBI:190710"/>
    </reaction>
    <physiologicalReaction direction="left-to-right" evidence="2">
        <dbReference type="Rhea" id="RHEA:71488"/>
    </physiologicalReaction>
</comment>
<comment type="catalytic activity">
    <reaction evidence="1">
        <text>Met-enkephalin-Arg-Phe + H2O = L-arginyl-L-phenylalanine + Met-enkephalin</text>
        <dbReference type="Rhea" id="RHEA:70675"/>
        <dbReference type="ChEBI" id="CHEBI:15377"/>
        <dbReference type="ChEBI" id="CHEBI:189868"/>
        <dbReference type="ChEBI" id="CHEBI:189869"/>
        <dbReference type="ChEBI" id="CHEBI:189870"/>
    </reaction>
    <physiologicalReaction direction="left-to-right" evidence="1">
        <dbReference type="Rhea" id="RHEA:70676"/>
    </physiologicalReaction>
</comment>
<comment type="catalytic activity">
    <molecule>Isoform Testis-specific</molecule>
    <reaction evidence="2">
        <text>Release of a C-terminal dipeptide, oligopeptide-|-Xaa-Yaa, when Xaa is not Pro, and Yaa is neither Asp nor Glu. Thus, conversion of angiotensin I to angiotensin II, with increase in vasoconstrictor activity, but no action on angiotensin II.</text>
        <dbReference type="EC" id="3.4.15.1"/>
    </reaction>
</comment>
<comment type="cofactor">
    <cofactor evidence="2">
        <name>Zn(2+)</name>
        <dbReference type="ChEBI" id="CHEBI:29105"/>
    </cofactor>
    <text evidence="2">Binds 2 Zn(2+) ions per subunit.</text>
</comment>
<comment type="cofactor">
    <molecule>Isoform Testis-specific</molecule>
    <cofactor evidence="2">
        <name>Zn(2+)</name>
        <dbReference type="ChEBI" id="CHEBI:29105"/>
    </cofactor>
    <text evidence="2">Isoform Testis-specific only binds 1 Zn(2+) ion per subunit.</text>
</comment>
<comment type="cofactor">
    <cofactor evidence="2">
        <name>chloride</name>
        <dbReference type="ChEBI" id="CHEBI:17996"/>
    </cofactor>
    <text evidence="2">Binds 3 chloride ions per subunit.</text>
</comment>
<comment type="cofactor">
    <molecule>Isoform Testis-specific</molecule>
    <cofactor evidence="2">
        <name>chloride</name>
        <dbReference type="ChEBI" id="CHEBI:17996"/>
    </cofactor>
</comment>
<comment type="activity regulation">
    <text evidence="2">The dipeptidyl carboxypeptidase activity is strongly activated by chloride. The dipeptidyl carboxypeptidase activity is specifically inhibited by lisinopril, captopril and enalaprilat.</text>
</comment>
<comment type="activity regulation">
    <molecule>Isoform Testis-specific</molecule>
    <text evidence="2">Strongly inhibited by lisinopril and captopril.</text>
</comment>
<comment type="subunit">
    <text evidence="2 3">Monomer and homodimer; homodimerizes following binding to an inhibitor (By similarity). Interacts with calmodulin (CALM1, CALM2 or CALM3); interaction takes place in the cytoplasmic region and regulates phosphorylation and proteolytic cleavage (By similarity).</text>
</comment>
<comment type="subcellular location">
    <subcellularLocation>
        <location evidence="2">Cell membrane</location>
        <topology evidence="4">Single-pass type I membrane protein</topology>
    </subcellularLocation>
    <subcellularLocation>
        <location evidence="1">Cytoplasm</location>
    </subcellularLocation>
    <text evidence="1">Detected in both cell membrane and cytoplasm in neurons.</text>
</comment>
<comment type="subcellular location">
    <molecule>Angiotensin-converting enzyme, soluble form</molecule>
    <subcellularLocation>
        <location evidence="2">Secreted</location>
    </subcellularLocation>
</comment>
<comment type="subcellular location">
    <molecule>Isoform Testis-specific</molecule>
    <subcellularLocation>
        <location evidence="2">Cell membrane</location>
        <topology evidence="4">Single-pass type I membrane protein</topology>
    </subcellularLocation>
    <subcellularLocation>
        <location evidence="2">Secreted</location>
    </subcellularLocation>
    <text evidence="2">The testis-specific isoform can be cleaved before the transmembrane region, releasing a soluble form.</text>
</comment>
<comment type="alternative products">
    <event type="alternative promoter"/>
    <isoform>
        <id>Q50JE5-1</id>
        <name>Somatic</name>
        <sequence type="displayed"/>
    </isoform>
    <isoform>
        <id>Q50JE5-2</id>
        <name>Testis-specific</name>
        <name>ACE-T</name>
        <sequence type="not described"/>
    </isoform>
</comment>
<comment type="tissue specificity">
    <text evidence="7">Widely expressed with dominant expression in lung and kidney.</text>
</comment>
<comment type="PTM">
    <molecule>Angiotensin-converting enzyme, soluble form</molecule>
    <text evidence="2">Produced following proteolytic cleavage by secretase enzymes that cleave the transmembrane form in the juxtamembrane stalk region upstream of the transmembrane region. Cleavage can take place at different sites of the juxtamembrane stalk region.</text>
</comment>
<comment type="PTM">
    <text evidence="2 3">Phosphorylated by CK2 on Ser-1307; which allows membrane retention (By similarity). Phosphorylated on tyrosine residues on its extracellular part, promoting cleavage by secretase enzymes and formation of the soluble form (Angiotensin-converting enzyme, soluble form) (By similarity).</text>
</comment>
<comment type="similarity">
    <text evidence="9">Belongs to the peptidase M2 family.</text>
</comment>
<feature type="signal peptide" evidence="2">
    <location>
        <begin position="1"/>
        <end position="35"/>
    </location>
</feature>
<feature type="chain" id="PRO_0000028536" description="Angiotensin-converting enzyme">
    <location>
        <begin position="36"/>
        <end position="1314"/>
    </location>
</feature>
<feature type="chain" id="PRO_0000028537" description="Angiotensin-converting enzyme, soluble form" evidence="2">
    <location>
        <begin position="36"/>
        <end position="1238"/>
    </location>
</feature>
<feature type="topological domain" description="Extracellular" evidence="4">
    <location>
        <begin position="36"/>
        <end position="1265"/>
    </location>
</feature>
<feature type="transmembrane region" description="Helical" evidence="4">
    <location>
        <begin position="1266"/>
        <end position="1282"/>
    </location>
</feature>
<feature type="topological domain" description="Cytoplasmic" evidence="4">
    <location>
        <begin position="1283"/>
        <end position="1314"/>
    </location>
</feature>
<feature type="domain" description="Peptidase M2 1" evidence="5">
    <location>
        <begin position="46"/>
        <end position="630"/>
    </location>
</feature>
<feature type="domain" description="Peptidase M2 2" evidence="5">
    <location>
        <begin position="649"/>
        <end position="1228"/>
    </location>
</feature>
<feature type="region of interest" description="Juxtamembrane stalk" evidence="2">
    <location>
        <begin position="1221"/>
        <end position="1262"/>
    </location>
</feature>
<feature type="region of interest" description="Disordered" evidence="6">
    <location>
        <begin position="1293"/>
        <end position="1314"/>
    </location>
</feature>
<feature type="active site" description="Proton acceptor 1" evidence="5">
    <location>
        <position position="397"/>
    </location>
</feature>
<feature type="active site" description="Proton donor 1" evidence="5">
    <location>
        <position position="526"/>
    </location>
</feature>
<feature type="active site" description="Proton acceptor 2" evidence="5">
    <location>
        <position position="995"/>
    </location>
</feature>
<feature type="active site" description="Proton donor 2" evidence="5">
    <location>
        <position position="1124"/>
    </location>
</feature>
<feature type="binding site" evidence="5">
    <location>
        <position position="237"/>
    </location>
    <ligand>
        <name>chloride</name>
        <dbReference type="ChEBI" id="CHEBI:17996"/>
        <label>1</label>
    </ligand>
</feature>
<feature type="binding site" evidence="5">
    <location>
        <position position="396"/>
    </location>
    <ligand>
        <name>Zn(2+)</name>
        <dbReference type="ChEBI" id="CHEBI:29105"/>
        <label>1</label>
        <note>catalytic</note>
    </ligand>
</feature>
<feature type="binding site" evidence="5">
    <location>
        <position position="400"/>
    </location>
    <ligand>
        <name>Zn(2+)</name>
        <dbReference type="ChEBI" id="CHEBI:29105"/>
        <label>1</label>
        <note>catalytic</note>
    </ligand>
</feature>
<feature type="binding site" evidence="5">
    <location>
        <position position="424"/>
    </location>
    <ligand>
        <name>Zn(2+)</name>
        <dbReference type="ChEBI" id="CHEBI:29105"/>
        <label>1</label>
        <note>catalytic</note>
    </ligand>
</feature>
<feature type="binding site" evidence="5">
    <location>
        <position position="535"/>
    </location>
    <ligand>
        <name>chloride</name>
        <dbReference type="ChEBI" id="CHEBI:17996"/>
        <label>1</label>
    </ligand>
</feature>
<feature type="binding site" evidence="5">
    <location>
        <position position="797"/>
    </location>
    <ligand>
        <name>chloride</name>
        <dbReference type="ChEBI" id="CHEBI:17996"/>
        <label>2</label>
    </ligand>
</feature>
<feature type="binding site" evidence="5">
    <location>
        <position position="835"/>
    </location>
    <ligand>
        <name>chloride</name>
        <dbReference type="ChEBI" id="CHEBI:17996"/>
        <label>3</label>
    </ligand>
</feature>
<feature type="binding site" evidence="5">
    <location>
        <position position="994"/>
    </location>
    <ligand>
        <name>Zn(2+)</name>
        <dbReference type="ChEBI" id="CHEBI:29105"/>
        <label>2</label>
        <note>catalytic</note>
    </ligand>
</feature>
<feature type="binding site" evidence="5">
    <location>
        <position position="998"/>
    </location>
    <ligand>
        <name>Zn(2+)</name>
        <dbReference type="ChEBI" id="CHEBI:29105"/>
        <label>2</label>
        <note>catalytic</note>
    </ligand>
</feature>
<feature type="binding site" evidence="5">
    <location>
        <position position="1022"/>
    </location>
    <ligand>
        <name>Zn(2+)</name>
        <dbReference type="ChEBI" id="CHEBI:29105"/>
        <label>2</label>
        <note>catalytic</note>
    </ligand>
</feature>
<feature type="binding site" evidence="5">
    <location>
        <position position="1096"/>
    </location>
    <ligand>
        <name>chloride</name>
        <dbReference type="ChEBI" id="CHEBI:17996"/>
        <label>2</label>
    </ligand>
</feature>
<feature type="binding site" evidence="5">
    <location>
        <position position="1100"/>
    </location>
    <ligand>
        <name>chloride</name>
        <dbReference type="ChEBI" id="CHEBI:17996"/>
        <label>2</label>
    </ligand>
</feature>
<feature type="binding site" evidence="5">
    <location>
        <position position="1133"/>
    </location>
    <ligand>
        <name>chloride</name>
        <dbReference type="ChEBI" id="CHEBI:17996"/>
        <label>3</label>
    </ligand>
</feature>
<feature type="modified residue" description="Phosphoserine" evidence="2">
    <location>
        <position position="1307"/>
    </location>
</feature>
<feature type="glycosylation site" description="N-linked (GlcNAc...) asparagine" evidence="4">
    <location>
        <position position="44"/>
    </location>
</feature>
<feature type="glycosylation site" description="N-linked (GlcNAc...) asparagine" evidence="4">
    <location>
        <position position="60"/>
    </location>
</feature>
<feature type="glycosylation site" description="N-linked (GlcNAc...) asparagine" evidence="4">
    <location>
        <position position="80"/>
    </location>
</feature>
<feature type="glycosylation site" description="N-linked (GlcNAc...) asparagine" evidence="4">
    <location>
        <position position="117"/>
    </location>
</feature>
<feature type="glycosylation site" description="N-linked (GlcNAc...) asparagine" evidence="4">
    <location>
        <position position="166"/>
    </location>
</feature>
<feature type="glycosylation site" description="N-linked (GlcNAc...) asparagine" evidence="4">
    <location>
        <position position="324"/>
    </location>
</feature>
<feature type="glycosylation site" description="N-linked (GlcNAc...) asparagine" evidence="4">
    <location>
        <position position="515"/>
    </location>
</feature>
<feature type="glycosylation site" description="N-linked (GlcNAc...) asparagine" evidence="4">
    <location>
        <position position="683"/>
    </location>
</feature>
<feature type="glycosylation site" description="N-linked (GlcNAc...) asparagine" evidence="4">
    <location>
        <position position="701"/>
    </location>
</feature>
<feature type="glycosylation site" description="N-linked (GlcNAc...) asparagine" evidence="4">
    <location>
        <position position="720"/>
    </location>
</feature>
<feature type="glycosylation site" description="N-linked (GlcNAc...) asparagine" evidence="4">
    <location>
        <position position="766"/>
    </location>
</feature>
<feature type="glycosylation site" description="N-linked (GlcNAc...) asparagine" evidence="4">
    <location>
        <position position="948"/>
    </location>
</feature>
<feature type="glycosylation site" description="N-linked (GlcNAc...) asparagine" evidence="4">
    <location>
        <position position="1197"/>
    </location>
</feature>
<feature type="disulfide bond" evidence="5">
    <location>
        <begin position="163"/>
        <end position="171"/>
    </location>
</feature>
<feature type="disulfide bond" evidence="5">
    <location>
        <begin position="365"/>
        <end position="383"/>
    </location>
</feature>
<feature type="disulfide bond" evidence="5">
    <location>
        <begin position="551"/>
        <end position="563"/>
    </location>
</feature>
<feature type="disulfide bond" evidence="5">
    <location>
        <begin position="763"/>
        <end position="769"/>
    </location>
</feature>
<feature type="disulfide bond" evidence="5">
    <location>
        <begin position="963"/>
        <end position="981"/>
    </location>
</feature>
<feature type="disulfide bond" evidence="5">
    <location>
        <begin position="1149"/>
        <end position="1161"/>
    </location>
</feature>
<evidence type="ECO:0000250" key="1">
    <source>
        <dbReference type="UniProtKB" id="P09470"/>
    </source>
</evidence>
<evidence type="ECO:0000250" key="2">
    <source>
        <dbReference type="UniProtKB" id="P12821"/>
    </source>
</evidence>
<evidence type="ECO:0000250" key="3">
    <source>
        <dbReference type="UniProtKB" id="P12822"/>
    </source>
</evidence>
<evidence type="ECO:0000255" key="4"/>
<evidence type="ECO:0000255" key="5">
    <source>
        <dbReference type="PROSITE-ProRule" id="PRU01355"/>
    </source>
</evidence>
<evidence type="ECO:0000256" key="6">
    <source>
        <dbReference type="SAM" id="MobiDB-lite"/>
    </source>
</evidence>
<evidence type="ECO:0000269" key="7">
    <source>
    </source>
</evidence>
<evidence type="ECO:0000303" key="8">
    <source>
    </source>
</evidence>
<evidence type="ECO:0000305" key="9"/>
<dbReference type="EC" id="3.4.15.1" evidence="2"/>
<dbReference type="EMBL" id="AB212958">
    <property type="protein sequence ID" value="BAD98304.1"/>
    <property type="molecule type" value="mRNA"/>
</dbReference>
<dbReference type="RefSeq" id="NP_001268510.1">
    <molecule id="Q50JE5-1"/>
    <property type="nucleotide sequence ID" value="NM_001281581.1"/>
</dbReference>
<dbReference type="SMR" id="Q50JE5"/>
<dbReference type="STRING" id="10036.ENSMAUP00000016025"/>
<dbReference type="MEROPS" id="M02.001"/>
<dbReference type="MEROPS" id="M02.004"/>
<dbReference type="GlyCosmos" id="Q50JE5">
    <property type="glycosylation" value="13 sites, No reported glycans"/>
</dbReference>
<dbReference type="GeneID" id="101824864"/>
<dbReference type="KEGG" id="maua:101824864"/>
<dbReference type="eggNOG" id="KOG3690">
    <property type="taxonomic scope" value="Eukaryota"/>
</dbReference>
<dbReference type="OrthoDB" id="10029630at2759"/>
<dbReference type="BRENDA" id="3.4.15.1">
    <property type="organism ID" value="3239"/>
</dbReference>
<dbReference type="Proteomes" id="UP000189706">
    <property type="component" value="Unplaced"/>
</dbReference>
<dbReference type="GO" id="GO:0005737">
    <property type="term" value="C:cytoplasm"/>
    <property type="evidence" value="ECO:0007669"/>
    <property type="project" value="UniProtKB-SubCell"/>
</dbReference>
<dbReference type="GO" id="GO:0005576">
    <property type="term" value="C:extracellular region"/>
    <property type="evidence" value="ECO:0007669"/>
    <property type="project" value="UniProtKB-SubCell"/>
</dbReference>
<dbReference type="GO" id="GO:0005615">
    <property type="term" value="C:extracellular space"/>
    <property type="evidence" value="ECO:0000250"/>
    <property type="project" value="UniProtKB"/>
</dbReference>
<dbReference type="GO" id="GO:0005886">
    <property type="term" value="C:plasma membrane"/>
    <property type="evidence" value="ECO:0000250"/>
    <property type="project" value="UniProtKB"/>
</dbReference>
<dbReference type="GO" id="GO:0005516">
    <property type="term" value="F:calmodulin binding"/>
    <property type="evidence" value="ECO:0007669"/>
    <property type="project" value="UniProtKB-KW"/>
</dbReference>
<dbReference type="GO" id="GO:0004180">
    <property type="term" value="F:carboxypeptidase activity"/>
    <property type="evidence" value="ECO:0007669"/>
    <property type="project" value="UniProtKB-KW"/>
</dbReference>
<dbReference type="GO" id="GO:0031404">
    <property type="term" value="F:chloride ion binding"/>
    <property type="evidence" value="ECO:0000250"/>
    <property type="project" value="UniProtKB"/>
</dbReference>
<dbReference type="GO" id="GO:0046872">
    <property type="term" value="F:metal ion binding"/>
    <property type="evidence" value="ECO:0007669"/>
    <property type="project" value="UniProtKB-KW"/>
</dbReference>
<dbReference type="GO" id="GO:0070573">
    <property type="term" value="F:metallodipeptidase activity"/>
    <property type="evidence" value="ECO:0000250"/>
    <property type="project" value="UniProtKB"/>
</dbReference>
<dbReference type="GO" id="GO:0004222">
    <property type="term" value="F:metalloendopeptidase activity"/>
    <property type="evidence" value="ECO:0000250"/>
    <property type="project" value="UniProtKB"/>
</dbReference>
<dbReference type="GO" id="GO:0008233">
    <property type="term" value="F:peptidase activity"/>
    <property type="evidence" value="ECO:0000250"/>
    <property type="project" value="UniProtKB"/>
</dbReference>
<dbReference type="GO" id="GO:0008241">
    <property type="term" value="F:peptidyl-dipeptidase activity"/>
    <property type="evidence" value="ECO:0000250"/>
    <property type="project" value="UniProtKB"/>
</dbReference>
<dbReference type="GO" id="GO:0002003">
    <property type="term" value="P:angiotensin maturation"/>
    <property type="evidence" value="ECO:0000250"/>
    <property type="project" value="UniProtKB"/>
</dbReference>
<dbReference type="GO" id="GO:0010815">
    <property type="term" value="P:bradykinin catabolic process"/>
    <property type="evidence" value="ECO:0000250"/>
    <property type="project" value="UniProtKB"/>
</dbReference>
<dbReference type="GO" id="GO:0042447">
    <property type="term" value="P:hormone catabolic process"/>
    <property type="evidence" value="ECO:0000250"/>
    <property type="project" value="UniProtKB"/>
</dbReference>
<dbReference type="GO" id="GO:0042445">
    <property type="term" value="P:hormone metabolic process"/>
    <property type="evidence" value="ECO:0000250"/>
    <property type="project" value="UniProtKB"/>
</dbReference>
<dbReference type="GO" id="GO:0001822">
    <property type="term" value="P:kidney development"/>
    <property type="evidence" value="ECO:0000250"/>
    <property type="project" value="UniProtKB"/>
</dbReference>
<dbReference type="GO" id="GO:0003084">
    <property type="term" value="P:positive regulation of systemic arterial blood pressure"/>
    <property type="evidence" value="ECO:0007669"/>
    <property type="project" value="TreeGrafter"/>
</dbReference>
<dbReference type="GO" id="GO:0008217">
    <property type="term" value="P:regulation of blood pressure"/>
    <property type="evidence" value="ECO:0000250"/>
    <property type="project" value="UniProtKB"/>
</dbReference>
<dbReference type="GO" id="GO:0048167">
    <property type="term" value="P:regulation of synaptic plasticity"/>
    <property type="evidence" value="ECO:0000250"/>
    <property type="project" value="UniProtKB"/>
</dbReference>
<dbReference type="GO" id="GO:0010814">
    <property type="term" value="P:substance P catabolic process"/>
    <property type="evidence" value="ECO:0000250"/>
    <property type="project" value="UniProtKB"/>
</dbReference>
<dbReference type="CDD" id="cd06461">
    <property type="entry name" value="M2_ACE"/>
    <property type="match status" value="2"/>
</dbReference>
<dbReference type="FunFam" id="1.10.1370.30:FF:000004">
    <property type="entry name" value="Angiotensin-converting enzyme"/>
    <property type="match status" value="2"/>
</dbReference>
<dbReference type="Gene3D" id="1.10.1370.30">
    <property type="match status" value="1"/>
</dbReference>
<dbReference type="InterPro" id="IPR001548">
    <property type="entry name" value="Peptidase_M2"/>
</dbReference>
<dbReference type="PANTHER" id="PTHR10514">
    <property type="entry name" value="ANGIOTENSIN-CONVERTING ENZYME"/>
    <property type="match status" value="1"/>
</dbReference>
<dbReference type="PANTHER" id="PTHR10514:SF25">
    <property type="entry name" value="ANGIOTENSIN-CONVERTING ENZYME"/>
    <property type="match status" value="1"/>
</dbReference>
<dbReference type="Pfam" id="PF01401">
    <property type="entry name" value="Peptidase_M2"/>
    <property type="match status" value="2"/>
</dbReference>
<dbReference type="PRINTS" id="PR00791">
    <property type="entry name" value="PEPDIPTASEA"/>
</dbReference>
<dbReference type="SUPFAM" id="SSF55486">
    <property type="entry name" value="Metalloproteases ('zincins'), catalytic domain"/>
    <property type="match status" value="2"/>
</dbReference>
<dbReference type="PROSITE" id="PS52011">
    <property type="entry name" value="PEPTIDASE_M2"/>
    <property type="match status" value="2"/>
</dbReference>
<dbReference type="PROSITE" id="PS00142">
    <property type="entry name" value="ZINC_PROTEASE"/>
    <property type="match status" value="2"/>
</dbReference>
<protein>
    <recommendedName>
        <fullName evidence="8">Angiotensin-converting enzyme</fullName>
        <shortName evidence="8">ACE</shortName>
        <ecNumber evidence="2">3.4.15.1</ecNumber>
    </recommendedName>
    <alternativeName>
        <fullName>Dipeptidyl carboxypeptidase I</fullName>
    </alternativeName>
    <alternativeName>
        <fullName evidence="2">Kininase II</fullName>
    </alternativeName>
    <cdAntigenName>CD143</cdAntigenName>
    <component>
        <recommendedName>
            <fullName evidence="2">Angiotensin-converting enzyme, soluble form</fullName>
        </recommendedName>
    </component>
</protein>
<reference key="1">
    <citation type="journal article" date="2006" name="DNA Seq.">
        <title>cDNA cloning of hamster angiotensin-converting enzyme and mRNA expression.</title>
        <authorList>
            <person name="Uchide T."/>
            <person name="Fujimori Y."/>
            <person name="Fukushima U."/>
            <person name="Uechi M."/>
            <person name="Sasaki T."/>
            <person name="Temma K."/>
        </authorList>
    </citation>
    <scope>NUCLEOTIDE SEQUENCE [MRNA]</scope>
    <scope>TISSUE SPECIFICITY</scope>
</reference>